<proteinExistence type="inferred from homology"/>
<feature type="chain" id="PRO_1000078531" description="Glycine--tRNA ligase alpha subunit">
    <location>
        <begin position="1"/>
        <end position="294"/>
    </location>
</feature>
<sequence>MLTFQQIILKLQDYWDQQGCALLQPIDLEVGAGTSHTATFLRAIGPEPWKAAYVQPSRRPKDGRYGENPNRLQHYYQYQVVLKPAPENILELYLGSLATLGLDLKQNDIRFVEDDWENPTLGAWGLGWEVWLNGMEVTQFTYFQQVGGLDCKPVLGEITYGIERLAMYIQNCSNVYDLVWADGISYGDVYHQNEVEQSCYNFEHSNTDLLFANFTNFESEAKRLMEVPLALPAYEMVLKAAHTFNLLDARGAISVTERAAYIGRIRNLSRAVAQAYFESREKLGFPMCQRQVKA</sequence>
<dbReference type="EC" id="6.1.1.14" evidence="1"/>
<dbReference type="EMBL" id="CP000655">
    <property type="protein sequence ID" value="ABP35075.1"/>
    <property type="molecule type" value="Genomic_DNA"/>
</dbReference>
<dbReference type="RefSeq" id="WP_011903698.1">
    <property type="nucleotide sequence ID" value="NC_009379.1"/>
</dbReference>
<dbReference type="SMR" id="A4T011"/>
<dbReference type="GeneID" id="31482253"/>
<dbReference type="KEGG" id="pnu:Pnuc_1863"/>
<dbReference type="eggNOG" id="COG0752">
    <property type="taxonomic scope" value="Bacteria"/>
</dbReference>
<dbReference type="HOGENOM" id="CLU_057066_1_0_4"/>
<dbReference type="Proteomes" id="UP000000231">
    <property type="component" value="Chromosome"/>
</dbReference>
<dbReference type="GO" id="GO:0005829">
    <property type="term" value="C:cytosol"/>
    <property type="evidence" value="ECO:0007669"/>
    <property type="project" value="TreeGrafter"/>
</dbReference>
<dbReference type="GO" id="GO:0005524">
    <property type="term" value="F:ATP binding"/>
    <property type="evidence" value="ECO:0007669"/>
    <property type="project" value="UniProtKB-UniRule"/>
</dbReference>
<dbReference type="GO" id="GO:0004820">
    <property type="term" value="F:glycine-tRNA ligase activity"/>
    <property type="evidence" value="ECO:0007669"/>
    <property type="project" value="UniProtKB-UniRule"/>
</dbReference>
<dbReference type="GO" id="GO:0006426">
    <property type="term" value="P:glycyl-tRNA aminoacylation"/>
    <property type="evidence" value="ECO:0007669"/>
    <property type="project" value="UniProtKB-UniRule"/>
</dbReference>
<dbReference type="CDD" id="cd00733">
    <property type="entry name" value="GlyRS_alpha_core"/>
    <property type="match status" value="1"/>
</dbReference>
<dbReference type="FunFam" id="3.30.930.10:FF:000006">
    <property type="entry name" value="Glycine--tRNA ligase alpha subunit"/>
    <property type="match status" value="1"/>
</dbReference>
<dbReference type="Gene3D" id="3.30.930.10">
    <property type="entry name" value="Bira Bifunctional Protein, Domain 2"/>
    <property type="match status" value="1"/>
</dbReference>
<dbReference type="Gene3D" id="1.20.58.180">
    <property type="entry name" value="Class II aaRS and biotin synthetases, domain 2"/>
    <property type="match status" value="1"/>
</dbReference>
<dbReference type="HAMAP" id="MF_00254">
    <property type="entry name" value="Gly_tRNA_synth_alpha"/>
    <property type="match status" value="1"/>
</dbReference>
<dbReference type="InterPro" id="IPR045864">
    <property type="entry name" value="aa-tRNA-synth_II/BPL/LPL"/>
</dbReference>
<dbReference type="InterPro" id="IPR006194">
    <property type="entry name" value="Gly-tRNA-synth_heterodimer"/>
</dbReference>
<dbReference type="InterPro" id="IPR002310">
    <property type="entry name" value="Gly-tRNA_ligase_asu"/>
</dbReference>
<dbReference type="NCBIfam" id="TIGR00388">
    <property type="entry name" value="glyQ"/>
    <property type="match status" value="1"/>
</dbReference>
<dbReference type="NCBIfam" id="NF006827">
    <property type="entry name" value="PRK09348.1"/>
    <property type="match status" value="1"/>
</dbReference>
<dbReference type="PANTHER" id="PTHR30075:SF2">
    <property type="entry name" value="GLYCINE--TRNA LIGASE, CHLOROPLASTIC_MITOCHONDRIAL 2"/>
    <property type="match status" value="1"/>
</dbReference>
<dbReference type="PANTHER" id="PTHR30075">
    <property type="entry name" value="GLYCYL-TRNA SYNTHETASE"/>
    <property type="match status" value="1"/>
</dbReference>
<dbReference type="Pfam" id="PF02091">
    <property type="entry name" value="tRNA-synt_2e"/>
    <property type="match status" value="1"/>
</dbReference>
<dbReference type="PRINTS" id="PR01044">
    <property type="entry name" value="TRNASYNTHGA"/>
</dbReference>
<dbReference type="SUPFAM" id="SSF55681">
    <property type="entry name" value="Class II aaRS and biotin synthetases"/>
    <property type="match status" value="1"/>
</dbReference>
<dbReference type="PROSITE" id="PS50861">
    <property type="entry name" value="AA_TRNA_LIGASE_II_GLYAB"/>
    <property type="match status" value="1"/>
</dbReference>
<keyword id="KW-0030">Aminoacyl-tRNA synthetase</keyword>
<keyword id="KW-0067">ATP-binding</keyword>
<keyword id="KW-0963">Cytoplasm</keyword>
<keyword id="KW-0436">Ligase</keyword>
<keyword id="KW-0547">Nucleotide-binding</keyword>
<keyword id="KW-0648">Protein biosynthesis</keyword>
<keyword id="KW-1185">Reference proteome</keyword>
<name>SYGA_POLAQ</name>
<comment type="catalytic activity">
    <reaction evidence="1">
        <text>tRNA(Gly) + glycine + ATP = glycyl-tRNA(Gly) + AMP + diphosphate</text>
        <dbReference type="Rhea" id="RHEA:16013"/>
        <dbReference type="Rhea" id="RHEA-COMP:9664"/>
        <dbReference type="Rhea" id="RHEA-COMP:9683"/>
        <dbReference type="ChEBI" id="CHEBI:30616"/>
        <dbReference type="ChEBI" id="CHEBI:33019"/>
        <dbReference type="ChEBI" id="CHEBI:57305"/>
        <dbReference type="ChEBI" id="CHEBI:78442"/>
        <dbReference type="ChEBI" id="CHEBI:78522"/>
        <dbReference type="ChEBI" id="CHEBI:456215"/>
        <dbReference type="EC" id="6.1.1.14"/>
    </reaction>
</comment>
<comment type="subunit">
    <text evidence="1">Tetramer of two alpha and two beta subunits.</text>
</comment>
<comment type="subcellular location">
    <subcellularLocation>
        <location evidence="1">Cytoplasm</location>
    </subcellularLocation>
</comment>
<comment type="similarity">
    <text evidence="1">Belongs to the class-II aminoacyl-tRNA synthetase family.</text>
</comment>
<reference key="1">
    <citation type="journal article" date="2012" name="Stand. Genomic Sci.">
        <title>Complete genome sequence of Polynucleobacter necessarius subsp. asymbioticus type strain (QLW-P1DMWA-1(T)).</title>
        <authorList>
            <person name="Meincke L."/>
            <person name="Copeland A."/>
            <person name="Lapidus A."/>
            <person name="Lucas S."/>
            <person name="Berry K.W."/>
            <person name="Del Rio T.G."/>
            <person name="Hammon N."/>
            <person name="Dalin E."/>
            <person name="Tice H."/>
            <person name="Pitluck S."/>
            <person name="Richardson P."/>
            <person name="Bruce D."/>
            <person name="Goodwin L."/>
            <person name="Han C."/>
            <person name="Tapia R."/>
            <person name="Detter J.C."/>
            <person name="Schmutz J."/>
            <person name="Brettin T."/>
            <person name="Larimer F."/>
            <person name="Land M."/>
            <person name="Hauser L."/>
            <person name="Kyrpides N.C."/>
            <person name="Ivanova N."/>
            <person name="Goker M."/>
            <person name="Woyke T."/>
            <person name="Wu Q.L."/>
            <person name="Pockl M."/>
            <person name="Hahn M.W."/>
            <person name="Klenk H.P."/>
        </authorList>
    </citation>
    <scope>NUCLEOTIDE SEQUENCE [LARGE SCALE GENOMIC DNA]</scope>
    <source>
        <strain>DSM 18221 / CIP 109841 / QLW-P1DMWA-1</strain>
    </source>
</reference>
<gene>
    <name evidence="1" type="primary">glyQ</name>
    <name type="ordered locus">Pnuc_1863</name>
</gene>
<organism>
    <name type="scientific">Polynucleobacter asymbioticus (strain DSM 18221 / CIP 109841 / QLW-P1DMWA-1)</name>
    <name type="common">Polynucleobacter necessarius subsp. asymbioticus</name>
    <dbReference type="NCBI Taxonomy" id="312153"/>
    <lineage>
        <taxon>Bacteria</taxon>
        <taxon>Pseudomonadati</taxon>
        <taxon>Pseudomonadota</taxon>
        <taxon>Betaproteobacteria</taxon>
        <taxon>Burkholderiales</taxon>
        <taxon>Burkholderiaceae</taxon>
        <taxon>Polynucleobacter</taxon>
    </lineage>
</organism>
<protein>
    <recommendedName>
        <fullName evidence="1">Glycine--tRNA ligase alpha subunit</fullName>
        <ecNumber evidence="1">6.1.1.14</ecNumber>
    </recommendedName>
    <alternativeName>
        <fullName evidence="1">Glycyl-tRNA synthetase alpha subunit</fullName>
        <shortName evidence="1">GlyRS</shortName>
    </alternativeName>
</protein>
<accession>A4T011</accession>
<evidence type="ECO:0000255" key="1">
    <source>
        <dbReference type="HAMAP-Rule" id="MF_00254"/>
    </source>
</evidence>